<dbReference type="EC" id="7.2.2.11" evidence="1"/>
<dbReference type="EMBL" id="AE005174">
    <property type="protein sequence ID" value="AAG58606.1"/>
    <property type="molecule type" value="Genomic_DNA"/>
</dbReference>
<dbReference type="EMBL" id="BA000007">
    <property type="protein sequence ID" value="BAB37769.1"/>
    <property type="molecule type" value="Genomic_DNA"/>
</dbReference>
<dbReference type="PIR" id="B86018">
    <property type="entry name" value="B86018"/>
</dbReference>
<dbReference type="PIR" id="B91172">
    <property type="entry name" value="B91172"/>
</dbReference>
<dbReference type="RefSeq" id="NP_312373.1">
    <property type="nucleotide sequence ID" value="NC_002695.1"/>
</dbReference>
<dbReference type="RefSeq" id="WP_001136210.1">
    <property type="nucleotide sequence ID" value="NZ_VOAI01000004.1"/>
</dbReference>
<dbReference type="SMR" id="Q8X5U1"/>
<dbReference type="STRING" id="155864.Z4871"/>
<dbReference type="GeneID" id="915804"/>
<dbReference type="KEGG" id="ece:Z4871"/>
<dbReference type="KEGG" id="ecs:ECs_4346"/>
<dbReference type="PATRIC" id="fig|386585.9.peg.4539"/>
<dbReference type="eggNOG" id="COG0444">
    <property type="taxonomic scope" value="Bacteria"/>
</dbReference>
<dbReference type="HOGENOM" id="CLU_000604_1_23_6"/>
<dbReference type="OMA" id="CCTAIVG"/>
<dbReference type="Proteomes" id="UP000000558">
    <property type="component" value="Chromosome"/>
</dbReference>
<dbReference type="Proteomes" id="UP000002519">
    <property type="component" value="Chromosome"/>
</dbReference>
<dbReference type="GO" id="GO:0005886">
    <property type="term" value="C:plasma membrane"/>
    <property type="evidence" value="ECO:0007669"/>
    <property type="project" value="UniProtKB-SubCell"/>
</dbReference>
<dbReference type="GO" id="GO:0015413">
    <property type="term" value="F:ABC-type nickel transporter activity"/>
    <property type="evidence" value="ECO:0007669"/>
    <property type="project" value="UniProtKB-EC"/>
</dbReference>
<dbReference type="GO" id="GO:0005524">
    <property type="term" value="F:ATP binding"/>
    <property type="evidence" value="ECO:0007669"/>
    <property type="project" value="UniProtKB-KW"/>
</dbReference>
<dbReference type="GO" id="GO:0016887">
    <property type="term" value="F:ATP hydrolysis activity"/>
    <property type="evidence" value="ECO:0007669"/>
    <property type="project" value="InterPro"/>
</dbReference>
<dbReference type="GO" id="GO:0016151">
    <property type="term" value="F:nickel cation binding"/>
    <property type="evidence" value="ECO:0007669"/>
    <property type="project" value="InterPro"/>
</dbReference>
<dbReference type="CDD" id="cd03257">
    <property type="entry name" value="ABC_NikE_OppD_transporters"/>
    <property type="match status" value="1"/>
</dbReference>
<dbReference type="FunFam" id="3.40.50.300:FF:000858">
    <property type="entry name" value="Nickel import ATP-binding protein NikD"/>
    <property type="match status" value="1"/>
</dbReference>
<dbReference type="Gene3D" id="3.40.50.300">
    <property type="entry name" value="P-loop containing nucleotide triphosphate hydrolases"/>
    <property type="match status" value="1"/>
</dbReference>
<dbReference type="InterPro" id="IPR003593">
    <property type="entry name" value="AAA+_ATPase"/>
</dbReference>
<dbReference type="InterPro" id="IPR050388">
    <property type="entry name" value="ABC_Ni/Peptide_Import"/>
</dbReference>
<dbReference type="InterPro" id="IPR003439">
    <property type="entry name" value="ABC_transporter-like_ATP-bd"/>
</dbReference>
<dbReference type="InterPro" id="IPR017871">
    <property type="entry name" value="ABC_transporter-like_CS"/>
</dbReference>
<dbReference type="InterPro" id="IPR014138">
    <property type="entry name" value="Nickel_NikD"/>
</dbReference>
<dbReference type="InterPro" id="IPR027417">
    <property type="entry name" value="P-loop_NTPase"/>
</dbReference>
<dbReference type="NCBIfam" id="TIGR02770">
    <property type="entry name" value="nickel_nikD"/>
    <property type="match status" value="1"/>
</dbReference>
<dbReference type="PANTHER" id="PTHR43297:SF2">
    <property type="entry name" value="DIPEPTIDE TRANSPORT ATP-BINDING PROTEIN DPPD"/>
    <property type="match status" value="1"/>
</dbReference>
<dbReference type="PANTHER" id="PTHR43297">
    <property type="entry name" value="OLIGOPEPTIDE TRANSPORT ATP-BINDING PROTEIN APPD"/>
    <property type="match status" value="1"/>
</dbReference>
<dbReference type="Pfam" id="PF00005">
    <property type="entry name" value="ABC_tran"/>
    <property type="match status" value="1"/>
</dbReference>
<dbReference type="SMART" id="SM00382">
    <property type="entry name" value="AAA"/>
    <property type="match status" value="1"/>
</dbReference>
<dbReference type="SUPFAM" id="SSF52540">
    <property type="entry name" value="P-loop containing nucleoside triphosphate hydrolases"/>
    <property type="match status" value="1"/>
</dbReference>
<dbReference type="PROSITE" id="PS00211">
    <property type="entry name" value="ABC_TRANSPORTER_1"/>
    <property type="match status" value="1"/>
</dbReference>
<dbReference type="PROSITE" id="PS50893">
    <property type="entry name" value="ABC_TRANSPORTER_2"/>
    <property type="match status" value="1"/>
</dbReference>
<dbReference type="PROSITE" id="PS51247">
    <property type="entry name" value="NIKD"/>
    <property type="match status" value="1"/>
</dbReference>
<name>NIKD_ECO57</name>
<sequence length="254" mass="26790">MPQQIELRNIALQAAQPLVHGVSLTLKRGRVLALVGGSGSGKSLTCAATLGILPAGVRQTAGEILADGKPVSPCALRGIKIATIMQNPRSAFNPLHTMHTHARETCLALGKPADDATLTAAIEAVGLENAARVLKLYPFEMSGGMLQRMMIAMAVLCESPFIIADEPTTDLDVVAQARILDLLESIMQKQAPGMLLVTHDMGVVARLADDVAVMSDGKIVEQGDVETLFNAPKHAVTRSLVSAHLALYGMELAS</sequence>
<gene>
    <name evidence="1" type="primary">nikD</name>
    <name type="ordered locus">Z4871</name>
    <name type="ordered locus">ECs4346</name>
</gene>
<proteinExistence type="inferred from homology"/>
<comment type="function">
    <text evidence="1">Part of the ABC transporter complex NikABCDE involved in nickel import. Responsible for energy coupling to the transport system.</text>
</comment>
<comment type="catalytic activity">
    <reaction evidence="1">
        <text>Ni(2+)(out) + ATP + H2O = Ni(2+)(in) + ADP + phosphate + H(+)</text>
        <dbReference type="Rhea" id="RHEA:15557"/>
        <dbReference type="ChEBI" id="CHEBI:15377"/>
        <dbReference type="ChEBI" id="CHEBI:15378"/>
        <dbReference type="ChEBI" id="CHEBI:30616"/>
        <dbReference type="ChEBI" id="CHEBI:43474"/>
        <dbReference type="ChEBI" id="CHEBI:49786"/>
        <dbReference type="ChEBI" id="CHEBI:456216"/>
        <dbReference type="EC" id="7.2.2.11"/>
    </reaction>
</comment>
<comment type="subunit">
    <text evidence="1">The complex is composed of two ATP-binding proteins (NikD and NikE), two transmembrane proteins (NikB and NikC) and a solute-binding protein (NikA).</text>
</comment>
<comment type="subcellular location">
    <subcellularLocation>
        <location evidence="1">Cell inner membrane</location>
        <topology evidence="1">Peripheral membrane protein</topology>
    </subcellularLocation>
</comment>
<comment type="similarity">
    <text evidence="1">Belongs to the ABC transporter superfamily. Nickel importer (TC 3.A.1.5.3) family.</text>
</comment>
<accession>Q8X5U1</accession>
<accession>Q7AA45</accession>
<keyword id="KW-0067">ATP-binding</keyword>
<keyword id="KW-0997">Cell inner membrane</keyword>
<keyword id="KW-1003">Cell membrane</keyword>
<keyword id="KW-0406">Ion transport</keyword>
<keyword id="KW-0472">Membrane</keyword>
<keyword id="KW-0533">Nickel</keyword>
<keyword id="KW-0921">Nickel transport</keyword>
<keyword id="KW-0547">Nucleotide-binding</keyword>
<keyword id="KW-1185">Reference proteome</keyword>
<keyword id="KW-1278">Translocase</keyword>
<keyword id="KW-0813">Transport</keyword>
<evidence type="ECO:0000255" key="1">
    <source>
        <dbReference type="HAMAP-Rule" id="MF_01711"/>
    </source>
</evidence>
<feature type="chain" id="PRO_0000092622" description="Nickel import ATP-binding protein NikD">
    <location>
        <begin position="1"/>
        <end position="254"/>
    </location>
</feature>
<feature type="domain" description="ABC transporter" evidence="1">
    <location>
        <begin position="2"/>
        <end position="241"/>
    </location>
</feature>
<feature type="binding site" evidence="1">
    <location>
        <begin position="36"/>
        <end position="43"/>
    </location>
    <ligand>
        <name>ATP</name>
        <dbReference type="ChEBI" id="CHEBI:30616"/>
    </ligand>
</feature>
<protein>
    <recommendedName>
        <fullName evidence="1">Nickel import ATP-binding protein NikD</fullName>
        <ecNumber evidence="1">7.2.2.11</ecNumber>
    </recommendedName>
</protein>
<organism>
    <name type="scientific">Escherichia coli O157:H7</name>
    <dbReference type="NCBI Taxonomy" id="83334"/>
    <lineage>
        <taxon>Bacteria</taxon>
        <taxon>Pseudomonadati</taxon>
        <taxon>Pseudomonadota</taxon>
        <taxon>Gammaproteobacteria</taxon>
        <taxon>Enterobacterales</taxon>
        <taxon>Enterobacteriaceae</taxon>
        <taxon>Escherichia</taxon>
    </lineage>
</organism>
<reference key="1">
    <citation type="journal article" date="2001" name="Nature">
        <title>Genome sequence of enterohaemorrhagic Escherichia coli O157:H7.</title>
        <authorList>
            <person name="Perna N.T."/>
            <person name="Plunkett G. III"/>
            <person name="Burland V."/>
            <person name="Mau B."/>
            <person name="Glasner J.D."/>
            <person name="Rose D.J."/>
            <person name="Mayhew G.F."/>
            <person name="Evans P.S."/>
            <person name="Gregor J."/>
            <person name="Kirkpatrick H.A."/>
            <person name="Posfai G."/>
            <person name="Hackett J."/>
            <person name="Klink S."/>
            <person name="Boutin A."/>
            <person name="Shao Y."/>
            <person name="Miller L."/>
            <person name="Grotbeck E.J."/>
            <person name="Davis N.W."/>
            <person name="Lim A."/>
            <person name="Dimalanta E.T."/>
            <person name="Potamousis K."/>
            <person name="Apodaca J."/>
            <person name="Anantharaman T.S."/>
            <person name="Lin J."/>
            <person name="Yen G."/>
            <person name="Schwartz D.C."/>
            <person name="Welch R.A."/>
            <person name="Blattner F.R."/>
        </authorList>
    </citation>
    <scope>NUCLEOTIDE SEQUENCE [LARGE SCALE GENOMIC DNA]</scope>
    <source>
        <strain>O157:H7 / EDL933 / ATCC 700927 / EHEC</strain>
    </source>
</reference>
<reference key="2">
    <citation type="journal article" date="2001" name="DNA Res.">
        <title>Complete genome sequence of enterohemorrhagic Escherichia coli O157:H7 and genomic comparison with a laboratory strain K-12.</title>
        <authorList>
            <person name="Hayashi T."/>
            <person name="Makino K."/>
            <person name="Ohnishi M."/>
            <person name="Kurokawa K."/>
            <person name="Ishii K."/>
            <person name="Yokoyama K."/>
            <person name="Han C.-G."/>
            <person name="Ohtsubo E."/>
            <person name="Nakayama K."/>
            <person name="Murata T."/>
            <person name="Tanaka M."/>
            <person name="Tobe T."/>
            <person name="Iida T."/>
            <person name="Takami H."/>
            <person name="Honda T."/>
            <person name="Sasakawa C."/>
            <person name="Ogasawara N."/>
            <person name="Yasunaga T."/>
            <person name="Kuhara S."/>
            <person name="Shiba T."/>
            <person name="Hattori M."/>
            <person name="Shinagawa H."/>
        </authorList>
    </citation>
    <scope>NUCLEOTIDE SEQUENCE [LARGE SCALE GENOMIC DNA]</scope>
    <source>
        <strain>O157:H7 / Sakai / RIMD 0509952 / EHEC</strain>
    </source>
</reference>